<dbReference type="EMBL" id="CU468135">
    <property type="protein sequence ID" value="CAO95396.1"/>
    <property type="molecule type" value="Genomic_DNA"/>
</dbReference>
<dbReference type="RefSeq" id="WP_012440111.1">
    <property type="nucleotide sequence ID" value="NC_010694.1"/>
</dbReference>
<dbReference type="SMR" id="B2VGN5"/>
<dbReference type="STRING" id="465817.ETA_03500"/>
<dbReference type="KEGG" id="eta:ETA_03500"/>
<dbReference type="eggNOG" id="COG0184">
    <property type="taxonomic scope" value="Bacteria"/>
</dbReference>
<dbReference type="HOGENOM" id="CLU_148518_0_0_6"/>
<dbReference type="OrthoDB" id="9799262at2"/>
<dbReference type="Proteomes" id="UP000001726">
    <property type="component" value="Chromosome"/>
</dbReference>
<dbReference type="GO" id="GO:0022627">
    <property type="term" value="C:cytosolic small ribosomal subunit"/>
    <property type="evidence" value="ECO:0007669"/>
    <property type="project" value="TreeGrafter"/>
</dbReference>
<dbReference type="GO" id="GO:0019843">
    <property type="term" value="F:rRNA binding"/>
    <property type="evidence" value="ECO:0007669"/>
    <property type="project" value="UniProtKB-UniRule"/>
</dbReference>
<dbReference type="GO" id="GO:0003735">
    <property type="term" value="F:structural constituent of ribosome"/>
    <property type="evidence" value="ECO:0007669"/>
    <property type="project" value="InterPro"/>
</dbReference>
<dbReference type="GO" id="GO:0006412">
    <property type="term" value="P:translation"/>
    <property type="evidence" value="ECO:0007669"/>
    <property type="project" value="UniProtKB-UniRule"/>
</dbReference>
<dbReference type="CDD" id="cd00353">
    <property type="entry name" value="Ribosomal_S15p_S13e"/>
    <property type="match status" value="1"/>
</dbReference>
<dbReference type="FunFam" id="1.10.287.10:FF:000002">
    <property type="entry name" value="30S ribosomal protein S15"/>
    <property type="match status" value="1"/>
</dbReference>
<dbReference type="Gene3D" id="6.10.250.3130">
    <property type="match status" value="1"/>
</dbReference>
<dbReference type="Gene3D" id="1.10.287.10">
    <property type="entry name" value="S15/NS1, RNA-binding"/>
    <property type="match status" value="1"/>
</dbReference>
<dbReference type="HAMAP" id="MF_01343_B">
    <property type="entry name" value="Ribosomal_uS15_B"/>
    <property type="match status" value="1"/>
</dbReference>
<dbReference type="InterPro" id="IPR000589">
    <property type="entry name" value="Ribosomal_uS15"/>
</dbReference>
<dbReference type="InterPro" id="IPR005290">
    <property type="entry name" value="Ribosomal_uS15_bac-type"/>
</dbReference>
<dbReference type="InterPro" id="IPR009068">
    <property type="entry name" value="uS15_NS1_RNA-bd_sf"/>
</dbReference>
<dbReference type="NCBIfam" id="TIGR00952">
    <property type="entry name" value="S15_bact"/>
    <property type="match status" value="1"/>
</dbReference>
<dbReference type="PANTHER" id="PTHR23321">
    <property type="entry name" value="RIBOSOMAL PROTEIN S15, BACTERIAL AND ORGANELLAR"/>
    <property type="match status" value="1"/>
</dbReference>
<dbReference type="PANTHER" id="PTHR23321:SF26">
    <property type="entry name" value="SMALL RIBOSOMAL SUBUNIT PROTEIN US15M"/>
    <property type="match status" value="1"/>
</dbReference>
<dbReference type="Pfam" id="PF00312">
    <property type="entry name" value="Ribosomal_S15"/>
    <property type="match status" value="1"/>
</dbReference>
<dbReference type="SMART" id="SM01387">
    <property type="entry name" value="Ribosomal_S15"/>
    <property type="match status" value="1"/>
</dbReference>
<dbReference type="SUPFAM" id="SSF47060">
    <property type="entry name" value="S15/NS1 RNA-binding domain"/>
    <property type="match status" value="1"/>
</dbReference>
<dbReference type="PROSITE" id="PS00362">
    <property type="entry name" value="RIBOSOMAL_S15"/>
    <property type="match status" value="1"/>
</dbReference>
<feature type="chain" id="PRO_1000143116" description="Small ribosomal subunit protein uS15">
    <location>
        <begin position="1"/>
        <end position="89"/>
    </location>
</feature>
<reference key="1">
    <citation type="journal article" date="2008" name="Environ. Microbiol.">
        <title>The genome of Erwinia tasmaniensis strain Et1/99, a non-pathogenic bacterium in the genus Erwinia.</title>
        <authorList>
            <person name="Kube M."/>
            <person name="Migdoll A.M."/>
            <person name="Mueller I."/>
            <person name="Kuhl H."/>
            <person name="Beck A."/>
            <person name="Reinhardt R."/>
            <person name="Geider K."/>
        </authorList>
    </citation>
    <scope>NUCLEOTIDE SEQUENCE [LARGE SCALE GENOMIC DNA]</scope>
    <source>
        <strain>DSM 17950 / CFBP 7177 / CIP 109463 / NCPPB 4357 / Et1/99</strain>
    </source>
</reference>
<gene>
    <name evidence="1" type="primary">rpsO</name>
    <name type="ordered locus">ETA_03500</name>
</gene>
<comment type="function">
    <text evidence="1">One of the primary rRNA binding proteins, it binds directly to 16S rRNA where it helps nucleate assembly of the platform of the 30S subunit by binding and bridging several RNA helices of the 16S rRNA.</text>
</comment>
<comment type="function">
    <text evidence="1">Forms an intersubunit bridge (bridge B4) with the 23S rRNA of the 50S subunit in the ribosome.</text>
</comment>
<comment type="subunit">
    <text evidence="1">Part of the 30S ribosomal subunit. Forms a bridge to the 50S subunit in the 70S ribosome, contacting the 23S rRNA.</text>
</comment>
<comment type="similarity">
    <text evidence="1">Belongs to the universal ribosomal protein uS15 family.</text>
</comment>
<keyword id="KW-1185">Reference proteome</keyword>
<keyword id="KW-0687">Ribonucleoprotein</keyword>
<keyword id="KW-0689">Ribosomal protein</keyword>
<keyword id="KW-0694">RNA-binding</keyword>
<keyword id="KW-0699">rRNA-binding</keyword>
<protein>
    <recommendedName>
        <fullName evidence="1">Small ribosomal subunit protein uS15</fullName>
    </recommendedName>
    <alternativeName>
        <fullName evidence="2">30S ribosomal protein S15</fullName>
    </alternativeName>
</protein>
<accession>B2VGN5</accession>
<sequence length="89" mass="10171">MSLSNETKAKIVADFGRDANDSGSTEVQVALLTAQISHLQGHFSEHKKDHHSRRGLLRMVSQRRKLLDYLKRKDVSRYTGLIARLGLRR</sequence>
<name>RS15_ERWT9</name>
<evidence type="ECO:0000255" key="1">
    <source>
        <dbReference type="HAMAP-Rule" id="MF_01343"/>
    </source>
</evidence>
<evidence type="ECO:0000305" key="2"/>
<organism>
    <name type="scientific">Erwinia tasmaniensis (strain DSM 17950 / CFBP 7177 / CIP 109463 / NCPPB 4357 / Et1/99)</name>
    <dbReference type="NCBI Taxonomy" id="465817"/>
    <lineage>
        <taxon>Bacteria</taxon>
        <taxon>Pseudomonadati</taxon>
        <taxon>Pseudomonadota</taxon>
        <taxon>Gammaproteobacteria</taxon>
        <taxon>Enterobacterales</taxon>
        <taxon>Erwiniaceae</taxon>
        <taxon>Erwinia</taxon>
    </lineage>
</organism>
<proteinExistence type="inferred from homology"/>